<protein>
    <recommendedName>
        <fullName>Uncharacterized killer plasmid pGKL-2 helicase</fullName>
        <ecNumber>3.6.4.-</ecNumber>
    </recommendedName>
    <alternativeName>
        <fullName>Plasmid pGKL-2 protein 4</fullName>
    </alternativeName>
</protein>
<keyword id="KW-0067">ATP-binding</keyword>
<keyword id="KW-0347">Helicase</keyword>
<keyword id="KW-0378">Hydrolase</keyword>
<keyword id="KW-0547">Nucleotide-binding</keyword>
<keyword id="KW-0614">Plasmid</keyword>
<organism>
    <name type="scientific">Kluyveromyces lactis (strain ATCC 8585 / CBS 2359 / DSM 70799 / NBRC 1267 / NRRL Y-1140 / WM37)</name>
    <name type="common">Yeast</name>
    <name type="synonym">Candida sphaerica</name>
    <dbReference type="NCBI Taxonomy" id="284590"/>
    <lineage>
        <taxon>Eukaryota</taxon>
        <taxon>Fungi</taxon>
        <taxon>Dikarya</taxon>
        <taxon>Ascomycota</taxon>
        <taxon>Saccharomycotina</taxon>
        <taxon>Saccharomycetes</taxon>
        <taxon>Saccharomycetales</taxon>
        <taxon>Saccharomycetaceae</taxon>
        <taxon>Kluyveromyces</taxon>
    </lineage>
</organism>
<comment type="function">
    <text>The presence of the two linear plasmids, termed pGKL1 and pGKL2, in strains of Kluyveromyces lactis confers the killer phenotype to the host cell, by promoting the secretion of a toxin able to inhibit the growth of sensitive strains.</text>
</comment>
<comment type="similarity">
    <text evidence="3">Belongs to the helicase family.</text>
</comment>
<name>YKP4_KLULA</name>
<accession>P05470</accession>
<proteinExistence type="inferred from homology"/>
<sequence>MVLKRVRCYYLIITIRLKMKVFTNKNLSIEQYGFINTFPNQNYILSYLHPYNPYSSLIVCYDVGLGKTYAAACLAHMYLDSGFKVLYLSNSLNSIDNFSNEYEKVVLDSRLNSLKKNITIKSFSKFYNCEKRGESDNVDYGLIILDEVHNLRESAYRYKLIKNKLDTMNNSKILVITATPMIDSKDELDSILSLTKETSRIIFSENKIDIKISYVGQEINGETLFLSEMKGQQLKEYLKVVNEENDTVYSSSRQASISLSNKFNPSIPLDEQSSKINAFINSIKEGELTVLFSFYVKRGIDFTSSVLESIGYKKWNSNKKQKRTYAVIDGRTNKKNVEEILTSFNSIANIKGDNIHILLGSSVLSESITLYRVKHLHIISPFWNYGQIKQSIGRAIRIGSHEGLEDKSMKVYLHAAHYDKEGKDIDIWKIAYDKNKDIIKRLEELKIDNEFSNDSLLDIPKIDNEMVIKINEWVWDFRNCFDTNKFKISWCKIYEDKAIGYNLENNTKIMGNIPSYIRINRPIPGGYTIWRSCIDKKLRISFIDGEVNKFSKRGKLISNVNTSEIAKDLNCENNIESIINTLKEQNRYFDKQIEYDL</sequence>
<reference key="1">
    <citation type="journal article" date="1988" name="Nucleic Acids Res.">
        <title>Genome organization of the killer plasmid pGKL2 from Kluyveromyces lactis.</title>
        <authorList>
            <person name="Tommasino M."/>
            <person name="Ricci S."/>
            <person name="Galeotti C.L."/>
        </authorList>
    </citation>
    <scope>NUCLEOTIDE SEQUENCE [GENOMIC DNA]</scope>
    <source>
        <strain>ATCC 8585 / CBS 2359 / DSM 70799 / NBRC 1267 / NRRL Y-1140 / WM37</strain>
    </source>
</reference>
<reference key="2">
    <citation type="journal article" date="1988" name="Nucleic Acids Res.">
        <title>Extranuclear gene expression in yeast: evidence for a plasmid-encoded RNA polymerase of unique structure.</title>
        <authorList>
            <person name="Wilson D.W."/>
            <person name="Meacock P.A."/>
        </authorList>
    </citation>
    <scope>NUCLEOTIDE SEQUENCE [GENOMIC DNA]</scope>
    <source>
        <strain>ATCC 8585 / CBS 2359 / DSM 70799 / NBRC 1267 / NRRL Y-1140 / WM37</strain>
    </source>
</reference>
<feature type="chain" id="PRO_0000102191" description="Uncharacterized killer plasmid pGKL-2 helicase">
    <location>
        <begin position="1"/>
        <end position="597"/>
    </location>
</feature>
<feature type="domain" description="Helicase ATP-binding" evidence="1">
    <location>
        <begin position="48"/>
        <end position="198"/>
    </location>
</feature>
<feature type="domain" description="Helicase C-terminal" evidence="2">
    <location>
        <begin position="275"/>
        <end position="467"/>
    </location>
</feature>
<feature type="short sequence motif" description="DEVH box">
    <location>
        <begin position="146"/>
        <end position="149"/>
    </location>
</feature>
<feature type="binding site" evidence="1">
    <location>
        <begin position="61"/>
        <end position="68"/>
    </location>
    <ligand>
        <name>ATP</name>
        <dbReference type="ChEBI" id="CHEBI:30616"/>
    </ligand>
</feature>
<feature type="sequence conflict" description="In Ref. 2; CAA30772." evidence="3" ref="2">
    <original>N</original>
    <variation>I</variation>
    <location>
        <position position="100"/>
    </location>
</feature>
<feature type="sequence conflict" description="In Ref. 2; CAA30772." evidence="3" ref="2">
    <original>I</original>
    <variation>N</variation>
    <location>
        <position position="575"/>
    </location>
</feature>
<dbReference type="EC" id="3.6.4.-"/>
<dbReference type="EMBL" id="X07776">
    <property type="protein sequence ID" value="CAA30605.1"/>
    <property type="molecule type" value="Genomic_DNA"/>
</dbReference>
<dbReference type="EMBL" id="X07946">
    <property type="protein sequence ID" value="CAA30772.1"/>
    <property type="molecule type" value="Genomic_DNA"/>
</dbReference>
<dbReference type="PIR" id="S00962">
    <property type="entry name" value="S00962"/>
</dbReference>
<dbReference type="PaxDb" id="284590-P05470"/>
<dbReference type="InParanoid" id="P05470"/>
<dbReference type="GO" id="GO:0005524">
    <property type="term" value="F:ATP binding"/>
    <property type="evidence" value="ECO:0007669"/>
    <property type="project" value="UniProtKB-KW"/>
</dbReference>
<dbReference type="GO" id="GO:0003677">
    <property type="term" value="F:DNA binding"/>
    <property type="evidence" value="ECO:0007669"/>
    <property type="project" value="InterPro"/>
</dbReference>
<dbReference type="GO" id="GO:0004386">
    <property type="term" value="F:helicase activity"/>
    <property type="evidence" value="ECO:0007669"/>
    <property type="project" value="UniProtKB-KW"/>
</dbReference>
<dbReference type="GO" id="GO:0016787">
    <property type="term" value="F:hydrolase activity"/>
    <property type="evidence" value="ECO:0007669"/>
    <property type="project" value="UniProtKB-KW"/>
</dbReference>
<dbReference type="Gene3D" id="3.40.50.300">
    <property type="entry name" value="P-loop containing nucleotide triphosphate hydrolases"/>
    <property type="match status" value="2"/>
</dbReference>
<dbReference type="InterPro" id="IPR006935">
    <property type="entry name" value="Helicase/UvrB_N"/>
</dbReference>
<dbReference type="InterPro" id="IPR014001">
    <property type="entry name" value="Helicase_ATP-bd"/>
</dbReference>
<dbReference type="InterPro" id="IPR001650">
    <property type="entry name" value="Helicase_C-like"/>
</dbReference>
<dbReference type="InterPro" id="IPR027417">
    <property type="entry name" value="P-loop_NTPase"/>
</dbReference>
<dbReference type="InterPro" id="IPR050496">
    <property type="entry name" value="SNF2_RAD54_helicase_repair"/>
</dbReference>
<dbReference type="PANTHER" id="PTHR45629:SF7">
    <property type="entry name" value="DNA EXCISION REPAIR PROTEIN ERCC-6-RELATED"/>
    <property type="match status" value="1"/>
</dbReference>
<dbReference type="PANTHER" id="PTHR45629">
    <property type="entry name" value="SNF2/RAD54 FAMILY MEMBER"/>
    <property type="match status" value="1"/>
</dbReference>
<dbReference type="Pfam" id="PF00271">
    <property type="entry name" value="Helicase_C"/>
    <property type="match status" value="1"/>
</dbReference>
<dbReference type="Pfam" id="PF04851">
    <property type="entry name" value="ResIII"/>
    <property type="match status" value="1"/>
</dbReference>
<dbReference type="SMART" id="SM00487">
    <property type="entry name" value="DEXDc"/>
    <property type="match status" value="1"/>
</dbReference>
<dbReference type="SMART" id="SM00490">
    <property type="entry name" value="HELICc"/>
    <property type="match status" value="1"/>
</dbReference>
<dbReference type="SUPFAM" id="SSF52540">
    <property type="entry name" value="P-loop containing nucleoside triphosphate hydrolases"/>
    <property type="match status" value="1"/>
</dbReference>
<dbReference type="PROSITE" id="PS51192">
    <property type="entry name" value="HELICASE_ATP_BIND_1"/>
    <property type="match status" value="1"/>
</dbReference>
<dbReference type="PROSITE" id="PS51194">
    <property type="entry name" value="HELICASE_CTER"/>
    <property type="match status" value="1"/>
</dbReference>
<evidence type="ECO:0000255" key="1">
    <source>
        <dbReference type="PROSITE-ProRule" id="PRU00541"/>
    </source>
</evidence>
<evidence type="ECO:0000255" key="2">
    <source>
        <dbReference type="PROSITE-ProRule" id="PRU00542"/>
    </source>
</evidence>
<evidence type="ECO:0000305" key="3"/>
<geneLocation type="plasmid">
    <name>pGKl-2</name>
</geneLocation>